<name>GP1D_CHLPS</name>
<sequence length="458" mass="52932">MIKQSEEEKDLLDVEFFVLGQAVNYLEHAHVVVRRLSEHHFKSENHKNIFLLIRDILRDRDTISISLIWEEIKRRNLDKSMDVSYLIHMSQNADIPIDLDHHIDFLHEKHVNNLLKEFLDSSFQDFTRYPNRRSPYTLIDQFKERLDDIYEKTSYPRRKHIGKTVYDIFSSGENGKASVIAQIRHRYDYRSRHKIDYVDGLPTGYSSIDEHSIILSRGNFVVIAARPAMGKTAFAIDIALNLVLEQGKAVGFISLEMSPNQIVERIISNLSETSCEQLKRGNFSRDVLSKIESIGTKLKGTHFFICDNKSTDLNTLIDQARELRENQGIDALFIDYLQLIGSSKKAENRQNEIAEISRQLRKLAVELQIPVVCLSQLSRKVEDRGDKRPMLSDLRDSGQIEQDADVILFLHRKDYYSQEATKGLSEIIVGKNRHGSVFSTTLRFNSCTGKFTIQKEAW</sequence>
<evidence type="ECO:0000250" key="1">
    <source>
        <dbReference type="UniProtKB" id="P0ACB0"/>
    </source>
</evidence>
<evidence type="ECO:0000250" key="2">
    <source>
        <dbReference type="UniProtKB" id="Q46437"/>
    </source>
</evidence>
<evidence type="ECO:0000255" key="3">
    <source>
        <dbReference type="PROSITE-ProRule" id="PRU00596"/>
    </source>
</evidence>
<evidence type="ECO:0000305" key="4"/>
<protein>
    <recommendedName>
        <fullName>Probable plasmid replicative DNA helicase</fullName>
        <ecNumber evidence="1">5.6.2.3</ecNumber>
    </recommendedName>
    <alternativeName>
        <fullName evidence="4">DNA 5'-3' helicase pGP1-D</fullName>
    </alternativeName>
    <alternativeName>
        <fullName>DnaB-like protein</fullName>
    </alternativeName>
    <alternativeName>
        <fullName evidence="2">Virulence plasmid helicase pGP1-D</fullName>
    </alternativeName>
</protein>
<reference key="1">
    <citation type="journal article" date="1997" name="Microbiology">
        <title>Plasmid diversity in Chlamydia.</title>
        <authorList>
            <person name="Thomas N.S."/>
            <person name="Lusher M."/>
            <person name="Storey C.C."/>
            <person name="Clarke I.N."/>
        </authorList>
    </citation>
    <scope>NUCLEOTIDE SEQUENCE [GENOMIC DNA]</scope>
    <source>
        <strain>N352</strain>
    </source>
</reference>
<dbReference type="EC" id="5.6.2.3" evidence="1"/>
<dbReference type="EMBL" id="X62475">
    <property type="protein sequence ID" value="CAA44335.1"/>
    <property type="molecule type" value="Genomic_DNA"/>
</dbReference>
<dbReference type="PIR" id="S18144">
    <property type="entry name" value="C39999"/>
</dbReference>
<dbReference type="RefSeq" id="NP_052326.1">
    <property type="nucleotide sequence ID" value="NC_002117.1"/>
</dbReference>
<dbReference type="RefSeq" id="WP_010891147.1">
    <property type="nucleotide sequence ID" value="NC_002117.1"/>
</dbReference>
<dbReference type="SMR" id="Q46259"/>
<dbReference type="GO" id="GO:0005829">
    <property type="term" value="C:cytosol"/>
    <property type="evidence" value="ECO:0007669"/>
    <property type="project" value="TreeGrafter"/>
</dbReference>
<dbReference type="GO" id="GO:1990077">
    <property type="term" value="C:primosome complex"/>
    <property type="evidence" value="ECO:0007669"/>
    <property type="project" value="UniProtKB-KW"/>
</dbReference>
<dbReference type="GO" id="GO:0005524">
    <property type="term" value="F:ATP binding"/>
    <property type="evidence" value="ECO:0007669"/>
    <property type="project" value="UniProtKB-KW"/>
</dbReference>
<dbReference type="GO" id="GO:0016887">
    <property type="term" value="F:ATP hydrolysis activity"/>
    <property type="evidence" value="ECO:0007669"/>
    <property type="project" value="RHEA"/>
</dbReference>
<dbReference type="GO" id="GO:0003677">
    <property type="term" value="F:DNA binding"/>
    <property type="evidence" value="ECO:0007669"/>
    <property type="project" value="UniProtKB-KW"/>
</dbReference>
<dbReference type="GO" id="GO:0003678">
    <property type="term" value="F:DNA helicase activity"/>
    <property type="evidence" value="ECO:0007669"/>
    <property type="project" value="InterPro"/>
</dbReference>
<dbReference type="GO" id="GO:0006269">
    <property type="term" value="P:DNA replication, synthesis of primer"/>
    <property type="evidence" value="ECO:0007669"/>
    <property type="project" value="UniProtKB-KW"/>
</dbReference>
<dbReference type="CDD" id="cd00984">
    <property type="entry name" value="DnaB_C"/>
    <property type="match status" value="1"/>
</dbReference>
<dbReference type="Gene3D" id="1.10.860.10">
    <property type="entry name" value="DNAb Helicase, Chain A"/>
    <property type="match status" value="1"/>
</dbReference>
<dbReference type="Gene3D" id="3.40.50.300">
    <property type="entry name" value="P-loop containing nucleotide triphosphate hydrolases"/>
    <property type="match status" value="1"/>
</dbReference>
<dbReference type="InterPro" id="IPR036185">
    <property type="entry name" value="DNA_heli_DnaB-like_N_sf"/>
</dbReference>
<dbReference type="InterPro" id="IPR007694">
    <property type="entry name" value="DNA_helicase_DnaB-like_C"/>
</dbReference>
<dbReference type="InterPro" id="IPR007693">
    <property type="entry name" value="DNA_helicase_DnaB-like_N"/>
</dbReference>
<dbReference type="InterPro" id="IPR016136">
    <property type="entry name" value="DNA_helicase_N/primase_C"/>
</dbReference>
<dbReference type="InterPro" id="IPR027417">
    <property type="entry name" value="P-loop_NTPase"/>
</dbReference>
<dbReference type="PANTHER" id="PTHR30153:SF2">
    <property type="entry name" value="REPLICATIVE DNA HELICASE"/>
    <property type="match status" value="1"/>
</dbReference>
<dbReference type="PANTHER" id="PTHR30153">
    <property type="entry name" value="REPLICATIVE DNA HELICASE DNAB"/>
    <property type="match status" value="1"/>
</dbReference>
<dbReference type="Pfam" id="PF00772">
    <property type="entry name" value="DnaB"/>
    <property type="match status" value="1"/>
</dbReference>
<dbReference type="Pfam" id="PF03796">
    <property type="entry name" value="DnaB_C"/>
    <property type="match status" value="1"/>
</dbReference>
<dbReference type="SUPFAM" id="SSF48024">
    <property type="entry name" value="N-terminal domain of DnaB helicase"/>
    <property type="match status" value="1"/>
</dbReference>
<dbReference type="SUPFAM" id="SSF52540">
    <property type="entry name" value="P-loop containing nucleoside triphosphate hydrolases"/>
    <property type="match status" value="1"/>
</dbReference>
<dbReference type="PROSITE" id="PS51199">
    <property type="entry name" value="SF4_HELICASE"/>
    <property type="match status" value="1"/>
</dbReference>
<geneLocation type="plasmid">
    <name>pCpA1</name>
</geneLocation>
<comment type="function">
    <text evidence="1">A replicative DNA helicase, it participates in initiation and elongation during DNA replication. Travels ahead of the DNA replisome, separating dsDNA into templates for DNA synthesis. A processive ATP-dependent 5'-3' DNA helicase it has DNA-dependent ATPase activity.</text>
</comment>
<comment type="catalytic activity">
    <reaction evidence="1">
        <text>Couples ATP hydrolysis with the unwinding of duplex DNA at the replication fork by translocating in the 5'-3' direction. This creates two antiparallel DNA single strands (ssDNA). The leading ssDNA polymer is the template for DNA polymerase III holoenzyme which synthesizes a continuous strand.</text>
        <dbReference type="EC" id="5.6.2.3"/>
    </reaction>
</comment>
<comment type="catalytic activity">
    <reaction evidence="1">
        <text>ATP + H2O = ADP + phosphate + H(+)</text>
        <dbReference type="Rhea" id="RHEA:13065"/>
        <dbReference type="ChEBI" id="CHEBI:15377"/>
        <dbReference type="ChEBI" id="CHEBI:15378"/>
        <dbReference type="ChEBI" id="CHEBI:30616"/>
        <dbReference type="ChEBI" id="CHEBI:43474"/>
        <dbReference type="ChEBI" id="CHEBI:456216"/>
        <dbReference type="EC" id="5.6.2.3"/>
    </reaction>
</comment>
<comment type="subunit">
    <text evidence="1">Homohexamer.</text>
</comment>
<comment type="similarity">
    <text evidence="4">Belongs to the helicase family. DnaB subfamily.</text>
</comment>
<accession>Q46259</accession>
<feature type="chain" id="PRO_0000102037" description="Probable plasmid replicative DNA helicase">
    <location>
        <begin position="1"/>
        <end position="458"/>
    </location>
</feature>
<feature type="domain" description="SF4 helicase" evidence="3">
    <location>
        <begin position="194"/>
        <end position="458"/>
    </location>
</feature>
<feature type="binding site" evidence="3">
    <location>
        <begin position="225"/>
        <end position="232"/>
    </location>
    <ligand>
        <name>ATP</name>
        <dbReference type="ChEBI" id="CHEBI:30616"/>
    </ligand>
</feature>
<proteinExistence type="inferred from homology"/>
<keyword id="KW-0067">ATP-binding</keyword>
<keyword id="KW-0235">DNA replication</keyword>
<keyword id="KW-0238">DNA-binding</keyword>
<keyword id="KW-0347">Helicase</keyword>
<keyword id="KW-0378">Hydrolase</keyword>
<keyword id="KW-0413">Isomerase</keyword>
<keyword id="KW-0547">Nucleotide-binding</keyword>
<keyword id="KW-0614">Plasmid</keyword>
<keyword id="KW-0639">Primosome</keyword>
<organism>
    <name type="scientific">Chlamydia psittaci</name>
    <name type="common">Chlamydophila psittaci</name>
    <dbReference type="NCBI Taxonomy" id="83554"/>
    <lineage>
        <taxon>Bacteria</taxon>
        <taxon>Pseudomonadati</taxon>
        <taxon>Chlamydiota</taxon>
        <taxon>Chlamydiia</taxon>
        <taxon>Chlamydiales</taxon>
        <taxon>Chlamydiaceae</taxon>
        <taxon>Chlamydia/Chlamydophila group</taxon>
        <taxon>Chlamydia</taxon>
    </lineage>
</organism>